<organism>
    <name type="scientific">Escherichia coli (strain K12)</name>
    <dbReference type="NCBI Taxonomy" id="83333"/>
    <lineage>
        <taxon>Bacteria</taxon>
        <taxon>Pseudomonadati</taxon>
        <taxon>Pseudomonadota</taxon>
        <taxon>Gammaproteobacteria</taxon>
        <taxon>Enterobacterales</taxon>
        <taxon>Enterobacteriaceae</taxon>
        <taxon>Escherichia</taxon>
    </lineage>
</organism>
<name>UIDR_ECOLI</name>
<feature type="chain" id="PRO_0000070628" description="HTH-type transcriptional regulator UidR">
    <location>
        <begin position="1"/>
        <end position="196"/>
    </location>
</feature>
<feature type="domain" description="HTH tetR-type" evidence="1">
    <location>
        <begin position="10"/>
        <end position="70"/>
    </location>
</feature>
<feature type="DNA-binding region" description="H-T-H motif" evidence="1">
    <location>
        <begin position="33"/>
        <end position="52"/>
    </location>
</feature>
<feature type="helix" evidence="2">
    <location>
        <begin position="12"/>
        <end position="31"/>
    </location>
</feature>
<feature type="helix" evidence="2">
    <location>
        <begin position="34"/>
        <end position="41"/>
    </location>
</feature>
<feature type="helix" evidence="2">
    <location>
        <begin position="45"/>
        <end position="51"/>
    </location>
</feature>
<feature type="helix" evidence="2">
    <location>
        <begin position="55"/>
        <end position="74"/>
    </location>
</feature>
<feature type="helix" evidence="2">
    <location>
        <begin position="83"/>
        <end position="94"/>
    </location>
</feature>
<feature type="helix" evidence="2">
    <location>
        <begin position="99"/>
        <end position="112"/>
    </location>
</feature>
<feature type="helix" evidence="2">
    <location>
        <begin position="116"/>
        <end position="142"/>
    </location>
</feature>
<feature type="helix" evidence="2">
    <location>
        <begin position="152"/>
        <end position="167"/>
    </location>
</feature>
<feature type="helix" evidence="2">
    <location>
        <begin position="172"/>
        <end position="175"/>
    </location>
</feature>
<feature type="helix" evidence="2">
    <location>
        <begin position="179"/>
        <end position="192"/>
    </location>
</feature>
<evidence type="ECO:0000255" key="1">
    <source>
        <dbReference type="PROSITE-ProRule" id="PRU00335"/>
    </source>
</evidence>
<evidence type="ECO:0007829" key="2">
    <source>
        <dbReference type="PDB" id="6AYI"/>
    </source>
</evidence>
<accession>P0ACT6</accession>
<accession>P76892</accession>
<accession>P76895</accession>
<accession>Q59431</accession>
<sequence length="196" mass="21799">MMDNMQTEAQPTRTRILNAAREIFSENGFHSASMKAICKSCAISPGTLYHHFISKEALIQAIILQDQERALARFREPIEGIHFVDYMVESIVSLTHEAFGQRALVVEIMAEGMRNPQVAAMLKNKHMTITEFVAQRMRDAQQKGEISPDINTAMTSRLLLDLTYGVLADIEAEDLAREASFAQGLRAMIGGILTAS</sequence>
<proteinExistence type="evidence at protein level"/>
<dbReference type="EMBL" id="M14641">
    <property type="protein sequence ID" value="AAA68922.1"/>
    <property type="molecule type" value="Genomic_DNA"/>
</dbReference>
<dbReference type="EMBL" id="U00096">
    <property type="protein sequence ID" value="AAC74690.1"/>
    <property type="molecule type" value="Genomic_DNA"/>
</dbReference>
<dbReference type="EMBL" id="AP009048">
    <property type="protein sequence ID" value="BAA15369.1"/>
    <property type="molecule type" value="Genomic_DNA"/>
</dbReference>
<dbReference type="PIR" id="D64918">
    <property type="entry name" value="D64918"/>
</dbReference>
<dbReference type="RefSeq" id="NP_416135.1">
    <property type="nucleotide sequence ID" value="NC_000913.3"/>
</dbReference>
<dbReference type="RefSeq" id="WP_000969092.1">
    <property type="nucleotide sequence ID" value="NZ_STEB01000003.1"/>
</dbReference>
<dbReference type="PDB" id="6AYI">
    <property type="method" value="X-ray"/>
    <property type="resolution" value="2.09 A"/>
    <property type="chains" value="A/B/C/D=1-196"/>
</dbReference>
<dbReference type="PDBsum" id="6AYI"/>
<dbReference type="SMR" id="P0ACT6"/>
<dbReference type="BioGRID" id="4263484">
    <property type="interactions" value="129"/>
</dbReference>
<dbReference type="BioGRID" id="850510">
    <property type="interactions" value="3"/>
</dbReference>
<dbReference type="DIP" id="DIP-48053N"/>
<dbReference type="FunCoup" id="P0ACT6">
    <property type="interactions" value="213"/>
</dbReference>
<dbReference type="IntAct" id="P0ACT6">
    <property type="interactions" value="11"/>
</dbReference>
<dbReference type="STRING" id="511145.b1618"/>
<dbReference type="jPOST" id="P0ACT6"/>
<dbReference type="PaxDb" id="511145-b1618"/>
<dbReference type="EnsemblBacteria" id="AAC74690">
    <property type="protein sequence ID" value="AAC74690"/>
    <property type="gene ID" value="b1618"/>
</dbReference>
<dbReference type="GeneID" id="75171678"/>
<dbReference type="GeneID" id="946150"/>
<dbReference type="KEGG" id="ecj:JW1610"/>
<dbReference type="KEGG" id="eco:b1618"/>
<dbReference type="KEGG" id="ecoc:C3026_09305"/>
<dbReference type="PATRIC" id="fig|511145.12.peg.1689"/>
<dbReference type="EchoBASE" id="EB2533"/>
<dbReference type="eggNOG" id="COG1309">
    <property type="taxonomic scope" value="Bacteria"/>
</dbReference>
<dbReference type="HOGENOM" id="CLU_069356_15_12_6"/>
<dbReference type="InParanoid" id="P0ACT6"/>
<dbReference type="OMA" id="AINHYFS"/>
<dbReference type="OrthoDB" id="5816932at2"/>
<dbReference type="PhylomeDB" id="P0ACT6"/>
<dbReference type="BioCyc" id="EcoCyc:G6867-MONOMER"/>
<dbReference type="PRO" id="PR:P0ACT6"/>
<dbReference type="Proteomes" id="UP000000625">
    <property type="component" value="Chromosome"/>
</dbReference>
<dbReference type="GO" id="GO:0003700">
    <property type="term" value="F:DNA-binding transcription factor activity"/>
    <property type="evidence" value="ECO:0000318"/>
    <property type="project" value="GO_Central"/>
</dbReference>
<dbReference type="GO" id="GO:0000976">
    <property type="term" value="F:transcription cis-regulatory region binding"/>
    <property type="evidence" value="ECO:0000318"/>
    <property type="project" value="GO_Central"/>
</dbReference>
<dbReference type="GO" id="GO:0006351">
    <property type="term" value="P:DNA-templated transcription"/>
    <property type="evidence" value="ECO:0000270"/>
    <property type="project" value="EcoCyc"/>
</dbReference>
<dbReference type="GO" id="GO:0045892">
    <property type="term" value="P:negative regulation of DNA-templated transcription"/>
    <property type="evidence" value="ECO:0000315"/>
    <property type="project" value="EcoCyc"/>
</dbReference>
<dbReference type="GO" id="GO:0006355">
    <property type="term" value="P:regulation of DNA-templated transcription"/>
    <property type="evidence" value="ECO:0000318"/>
    <property type="project" value="GO_Central"/>
</dbReference>
<dbReference type="Gene3D" id="1.10.357.10">
    <property type="entry name" value="Tetracycline Repressor, domain 2"/>
    <property type="match status" value="1"/>
</dbReference>
<dbReference type="InterPro" id="IPR023772">
    <property type="entry name" value="DNA-bd_HTH_TetR-type_CS"/>
</dbReference>
<dbReference type="InterPro" id="IPR009057">
    <property type="entry name" value="Homeodomain-like_sf"/>
</dbReference>
<dbReference type="InterPro" id="IPR050109">
    <property type="entry name" value="HTH-type_TetR-like_transc_reg"/>
</dbReference>
<dbReference type="InterPro" id="IPR001647">
    <property type="entry name" value="HTH_TetR"/>
</dbReference>
<dbReference type="InterPro" id="IPR036271">
    <property type="entry name" value="Tet_transcr_reg_TetR-rel_C_sf"/>
</dbReference>
<dbReference type="PANTHER" id="PTHR30055">
    <property type="entry name" value="HTH-TYPE TRANSCRIPTIONAL REGULATOR RUTR"/>
    <property type="match status" value="1"/>
</dbReference>
<dbReference type="PANTHER" id="PTHR30055:SF223">
    <property type="entry name" value="HTH-TYPE TRANSCRIPTIONAL REGULATOR UIDR"/>
    <property type="match status" value="1"/>
</dbReference>
<dbReference type="Pfam" id="PF00440">
    <property type="entry name" value="TetR_N"/>
    <property type="match status" value="1"/>
</dbReference>
<dbReference type="PRINTS" id="PR00455">
    <property type="entry name" value="HTHTETR"/>
</dbReference>
<dbReference type="SUPFAM" id="SSF46689">
    <property type="entry name" value="Homeodomain-like"/>
    <property type="match status" value="1"/>
</dbReference>
<dbReference type="SUPFAM" id="SSF48498">
    <property type="entry name" value="Tetracyclin repressor-like, C-terminal domain"/>
    <property type="match status" value="1"/>
</dbReference>
<dbReference type="PROSITE" id="PS01081">
    <property type="entry name" value="HTH_TETR_1"/>
    <property type="match status" value="1"/>
</dbReference>
<dbReference type="PROSITE" id="PS50977">
    <property type="entry name" value="HTH_TETR_2"/>
    <property type="match status" value="1"/>
</dbReference>
<reference key="1">
    <citation type="submission" date="1994-10" db="EMBL/GenBank/DDBJ databases">
        <title>The GusR repressor of Esherichia coli.</title>
        <authorList>
            <person name="Wilson K.J."/>
            <person name="Jefferson R.A."/>
        </authorList>
    </citation>
    <scope>NUCLEOTIDE SEQUENCE [GENOMIC DNA]</scope>
    <source>
        <strain>K12</strain>
    </source>
</reference>
<reference key="2">
    <citation type="journal article" date="1996" name="DNA Res.">
        <title>A 570-kb DNA sequence of the Escherichia coli K-12 genome corresponding to the 28.0-40.1 min region on the linkage map.</title>
        <authorList>
            <person name="Aiba H."/>
            <person name="Baba T."/>
            <person name="Fujita K."/>
            <person name="Hayashi K."/>
            <person name="Inada T."/>
            <person name="Isono K."/>
            <person name="Itoh T."/>
            <person name="Kasai H."/>
            <person name="Kashimoto K."/>
            <person name="Kimura S."/>
            <person name="Kitakawa M."/>
            <person name="Kitagawa M."/>
            <person name="Makino K."/>
            <person name="Miki T."/>
            <person name="Mizobuchi K."/>
            <person name="Mori H."/>
            <person name="Mori T."/>
            <person name="Motomura K."/>
            <person name="Nakade S."/>
            <person name="Nakamura Y."/>
            <person name="Nashimoto H."/>
            <person name="Nishio Y."/>
            <person name="Oshima T."/>
            <person name="Saito N."/>
            <person name="Sampei G."/>
            <person name="Seki Y."/>
            <person name="Sivasundaram S."/>
            <person name="Tagami H."/>
            <person name="Takeda J."/>
            <person name="Takemoto K."/>
            <person name="Takeuchi Y."/>
            <person name="Wada C."/>
            <person name="Yamamoto Y."/>
            <person name="Horiuchi T."/>
        </authorList>
    </citation>
    <scope>NUCLEOTIDE SEQUENCE [LARGE SCALE GENOMIC DNA]</scope>
    <source>
        <strain>K12 / W3110 / ATCC 27325 / DSM 5911</strain>
    </source>
</reference>
<reference key="3">
    <citation type="journal article" date="1997" name="Science">
        <title>The complete genome sequence of Escherichia coli K-12.</title>
        <authorList>
            <person name="Blattner F.R."/>
            <person name="Plunkett G. III"/>
            <person name="Bloch C.A."/>
            <person name="Perna N.T."/>
            <person name="Burland V."/>
            <person name="Riley M."/>
            <person name="Collado-Vides J."/>
            <person name="Glasner J.D."/>
            <person name="Rode C.K."/>
            <person name="Mayhew G.F."/>
            <person name="Gregor J."/>
            <person name="Davis N.W."/>
            <person name="Kirkpatrick H.A."/>
            <person name="Goeden M.A."/>
            <person name="Rose D.J."/>
            <person name="Mau B."/>
            <person name="Shao Y."/>
        </authorList>
    </citation>
    <scope>NUCLEOTIDE SEQUENCE [LARGE SCALE GENOMIC DNA]</scope>
    <source>
        <strain>K12 / MG1655 / ATCC 47076</strain>
    </source>
</reference>
<reference key="4">
    <citation type="journal article" date="2006" name="Mol. Syst. Biol.">
        <title>Highly accurate genome sequences of Escherichia coli K-12 strains MG1655 and W3110.</title>
        <authorList>
            <person name="Hayashi K."/>
            <person name="Morooka N."/>
            <person name="Yamamoto Y."/>
            <person name="Fujita K."/>
            <person name="Isono K."/>
            <person name="Choi S."/>
            <person name="Ohtsubo E."/>
            <person name="Baba T."/>
            <person name="Wanner B.L."/>
            <person name="Mori H."/>
            <person name="Horiuchi T."/>
        </authorList>
    </citation>
    <scope>NUCLEOTIDE SEQUENCE [LARGE SCALE GENOMIC DNA]</scope>
    <source>
        <strain>K12 / W3110 / ATCC 27325 / DSM 5911</strain>
    </source>
</reference>
<comment type="function">
    <text>Repressor for the uidRABC (gusRABC) operon.</text>
</comment>
<protein>
    <recommendedName>
        <fullName>HTH-type transcriptional regulator UidR</fullName>
    </recommendedName>
    <alternativeName>
        <fullName>Gus operon repressor</fullName>
    </alternativeName>
    <alternativeName>
        <fullName>Uid operon repressor</fullName>
    </alternativeName>
</protein>
<keyword id="KW-0002">3D-structure</keyword>
<keyword id="KW-0238">DNA-binding</keyword>
<keyword id="KW-1185">Reference proteome</keyword>
<keyword id="KW-0678">Repressor</keyword>
<keyword id="KW-0804">Transcription</keyword>
<keyword id="KW-0805">Transcription regulation</keyword>
<gene>
    <name type="primary">uidR</name>
    <name type="synonym">gusR</name>
    <name type="ordered locus">b1618</name>
    <name type="ordered locus">JW1610</name>
</gene>